<protein>
    <recommendedName>
        <fullName evidence="1">GMP reductase</fullName>
        <ecNumber evidence="1">1.7.1.7</ecNumber>
    </recommendedName>
    <alternativeName>
        <fullName evidence="1">Guanosine 5'-monophosphate oxidoreductase</fullName>
        <shortName evidence="1">Guanosine monophosphate reductase</shortName>
    </alternativeName>
</protein>
<comment type="function">
    <text evidence="1">Catalyzes the irreversible NADPH-dependent deamination of GMP to IMP. It functions in the conversion of nucleobase, nucleoside and nucleotide derivatives of G to A nucleotides, and in maintaining the intracellular balance of A and G nucleotides.</text>
</comment>
<comment type="catalytic activity">
    <reaction evidence="1">
        <text>IMP + NH4(+) + NADP(+) = GMP + NADPH + 2 H(+)</text>
        <dbReference type="Rhea" id="RHEA:17185"/>
        <dbReference type="ChEBI" id="CHEBI:15378"/>
        <dbReference type="ChEBI" id="CHEBI:28938"/>
        <dbReference type="ChEBI" id="CHEBI:57783"/>
        <dbReference type="ChEBI" id="CHEBI:58053"/>
        <dbReference type="ChEBI" id="CHEBI:58115"/>
        <dbReference type="ChEBI" id="CHEBI:58349"/>
        <dbReference type="EC" id="1.7.1.7"/>
    </reaction>
</comment>
<comment type="similarity">
    <text evidence="1">Belongs to the IMPDH/GMPR family. GuaC type 2 subfamily.</text>
</comment>
<gene>
    <name evidence="1" type="primary">guaC</name>
    <name type="ordered locus">Lcho_2764</name>
</gene>
<name>GUAC_LEPCP</name>
<feature type="chain" id="PRO_1000146139" description="GMP reductase">
    <location>
        <begin position="1"/>
        <end position="325"/>
    </location>
</feature>
<feature type="active site" description="Thioimidate intermediate" evidence="1">
    <location>
        <position position="173"/>
    </location>
</feature>
<feature type="binding site" evidence="1">
    <location>
        <begin position="202"/>
        <end position="225"/>
    </location>
    <ligand>
        <name>NADP(+)</name>
        <dbReference type="ChEBI" id="CHEBI:58349"/>
    </ligand>
</feature>
<proteinExistence type="inferred from homology"/>
<accession>B1XWM8</accession>
<evidence type="ECO:0000255" key="1">
    <source>
        <dbReference type="HAMAP-Rule" id="MF_01511"/>
    </source>
</evidence>
<keyword id="KW-0521">NADP</keyword>
<keyword id="KW-0560">Oxidoreductase</keyword>
<keyword id="KW-1185">Reference proteome</keyword>
<organism>
    <name type="scientific">Leptothrix cholodnii (strain ATCC 51168 / LMG 8142 / SP-6)</name>
    <name type="common">Leptothrix discophora (strain SP-6)</name>
    <dbReference type="NCBI Taxonomy" id="395495"/>
    <lineage>
        <taxon>Bacteria</taxon>
        <taxon>Pseudomonadati</taxon>
        <taxon>Pseudomonadota</taxon>
        <taxon>Betaproteobacteria</taxon>
        <taxon>Burkholderiales</taxon>
        <taxon>Sphaerotilaceae</taxon>
        <taxon>Leptothrix</taxon>
    </lineage>
</organism>
<sequence length="325" mass="35746">MEIFDYDNVLLLPRQCRVESRSECDPSVEFGPRRFKLPVVPANMKTVLDERIARWLAANDYFYVMHRFDLDALAFARSMREQGLCVSISSGVKPADYAVIDSLATSGVGADYITIDIAHGHAESVRRMIAHIKQRLPEAFVIAGNVGTPEALIDLENWGADATKVGIGPGKVCITRLKTGFGTGGWQLSALKWCARVATKPIIADGGIRHHGDIAKSVRFGAAMVMVGSLFAGHEESPGDTVEVDGRLYKEYYGSASDFNKGEYKHVEGKRILEPVKGRLADTLREMREDLQSSISYAGGRQLSDLRRVNYVILGGENAGEHLLM</sequence>
<reference key="1">
    <citation type="submission" date="2008-03" db="EMBL/GenBank/DDBJ databases">
        <title>Complete sequence of Leptothrix cholodnii SP-6.</title>
        <authorList>
            <consortium name="US DOE Joint Genome Institute"/>
            <person name="Copeland A."/>
            <person name="Lucas S."/>
            <person name="Lapidus A."/>
            <person name="Glavina del Rio T."/>
            <person name="Dalin E."/>
            <person name="Tice H."/>
            <person name="Bruce D."/>
            <person name="Goodwin L."/>
            <person name="Pitluck S."/>
            <person name="Chertkov O."/>
            <person name="Brettin T."/>
            <person name="Detter J.C."/>
            <person name="Han C."/>
            <person name="Kuske C.R."/>
            <person name="Schmutz J."/>
            <person name="Larimer F."/>
            <person name="Land M."/>
            <person name="Hauser L."/>
            <person name="Kyrpides N."/>
            <person name="Lykidis A."/>
            <person name="Emerson D."/>
            <person name="Richardson P."/>
        </authorList>
    </citation>
    <scope>NUCLEOTIDE SEQUENCE [LARGE SCALE GENOMIC DNA]</scope>
    <source>
        <strain>ATCC 51168 / LMG 8142 / SP-6</strain>
    </source>
</reference>
<dbReference type="EC" id="1.7.1.7" evidence="1"/>
<dbReference type="EMBL" id="CP001013">
    <property type="protein sequence ID" value="ACB35029.1"/>
    <property type="molecule type" value="Genomic_DNA"/>
</dbReference>
<dbReference type="RefSeq" id="WP_012347783.1">
    <property type="nucleotide sequence ID" value="NC_010524.1"/>
</dbReference>
<dbReference type="SMR" id="B1XWM8"/>
<dbReference type="STRING" id="395495.Lcho_2764"/>
<dbReference type="KEGG" id="lch:Lcho_2764"/>
<dbReference type="eggNOG" id="COG0516">
    <property type="taxonomic scope" value="Bacteria"/>
</dbReference>
<dbReference type="HOGENOM" id="CLU_022552_5_0_4"/>
<dbReference type="OrthoDB" id="9805398at2"/>
<dbReference type="Proteomes" id="UP000001693">
    <property type="component" value="Chromosome"/>
</dbReference>
<dbReference type="GO" id="GO:0005829">
    <property type="term" value="C:cytosol"/>
    <property type="evidence" value="ECO:0007669"/>
    <property type="project" value="TreeGrafter"/>
</dbReference>
<dbReference type="GO" id="GO:1902560">
    <property type="term" value="C:GMP reductase complex"/>
    <property type="evidence" value="ECO:0007669"/>
    <property type="project" value="InterPro"/>
</dbReference>
<dbReference type="GO" id="GO:0003920">
    <property type="term" value="F:GMP reductase activity"/>
    <property type="evidence" value="ECO:0007669"/>
    <property type="project" value="UniProtKB-UniRule"/>
</dbReference>
<dbReference type="GO" id="GO:0006163">
    <property type="term" value="P:purine nucleotide metabolic process"/>
    <property type="evidence" value="ECO:0007669"/>
    <property type="project" value="UniProtKB-UniRule"/>
</dbReference>
<dbReference type="CDD" id="cd00381">
    <property type="entry name" value="IMPDH"/>
    <property type="match status" value="1"/>
</dbReference>
<dbReference type="Gene3D" id="3.20.20.70">
    <property type="entry name" value="Aldolase class I"/>
    <property type="match status" value="1"/>
</dbReference>
<dbReference type="HAMAP" id="MF_01511">
    <property type="entry name" value="GMP_reduct_type2"/>
    <property type="match status" value="1"/>
</dbReference>
<dbReference type="InterPro" id="IPR013785">
    <property type="entry name" value="Aldolase_TIM"/>
</dbReference>
<dbReference type="InterPro" id="IPR050139">
    <property type="entry name" value="GMP_reductase"/>
</dbReference>
<dbReference type="InterPro" id="IPR005994">
    <property type="entry name" value="GuaC_type_2"/>
</dbReference>
<dbReference type="InterPro" id="IPR015875">
    <property type="entry name" value="IMP_DH/GMP_Rdtase_CS"/>
</dbReference>
<dbReference type="InterPro" id="IPR001093">
    <property type="entry name" value="IMP_DH_GMPRt"/>
</dbReference>
<dbReference type="NCBIfam" id="TIGR01306">
    <property type="entry name" value="GMP_reduct_2"/>
    <property type="match status" value="1"/>
</dbReference>
<dbReference type="NCBIfam" id="NF003966">
    <property type="entry name" value="PRK05458.1"/>
    <property type="match status" value="1"/>
</dbReference>
<dbReference type="PANTHER" id="PTHR43170">
    <property type="entry name" value="GMP REDUCTASE"/>
    <property type="match status" value="1"/>
</dbReference>
<dbReference type="PANTHER" id="PTHR43170:SF5">
    <property type="entry name" value="GMP REDUCTASE"/>
    <property type="match status" value="1"/>
</dbReference>
<dbReference type="Pfam" id="PF00478">
    <property type="entry name" value="IMPDH"/>
    <property type="match status" value="1"/>
</dbReference>
<dbReference type="PIRSF" id="PIRSF036500">
    <property type="entry name" value="GMP_red_Firmic"/>
    <property type="match status" value="1"/>
</dbReference>
<dbReference type="SMART" id="SM01240">
    <property type="entry name" value="IMPDH"/>
    <property type="match status" value="1"/>
</dbReference>
<dbReference type="SUPFAM" id="SSF51412">
    <property type="entry name" value="Inosine monophosphate dehydrogenase (IMPDH)"/>
    <property type="match status" value="1"/>
</dbReference>
<dbReference type="PROSITE" id="PS00487">
    <property type="entry name" value="IMP_DH_GMP_RED"/>
    <property type="match status" value="1"/>
</dbReference>